<gene>
    <name type="ordered locus">MAP_4149</name>
</gene>
<name>Y4149_MYCPA</name>
<dbReference type="EC" id="1.1.1.-" evidence="1"/>
<dbReference type="EMBL" id="AE016958">
    <property type="protein sequence ID" value="AAS06699.1"/>
    <property type="molecule type" value="Genomic_DNA"/>
</dbReference>
<dbReference type="RefSeq" id="WP_010950251.1">
    <property type="nucleotide sequence ID" value="NZ_CP106873.1"/>
</dbReference>
<dbReference type="SMR" id="Q73SC5"/>
<dbReference type="STRING" id="262316.MAP_4149"/>
<dbReference type="KEGG" id="mpa:MAP_4149"/>
<dbReference type="PATRIC" id="fig|262316.17.peg.4421"/>
<dbReference type="eggNOG" id="COG0656">
    <property type="taxonomic scope" value="Bacteria"/>
</dbReference>
<dbReference type="HOGENOM" id="CLU_023205_0_1_11"/>
<dbReference type="Proteomes" id="UP000000580">
    <property type="component" value="Chromosome"/>
</dbReference>
<dbReference type="GO" id="GO:0004033">
    <property type="term" value="F:aldo-keto reductase (NADPH) activity"/>
    <property type="evidence" value="ECO:0007669"/>
    <property type="project" value="TreeGrafter"/>
</dbReference>
<dbReference type="FunFam" id="3.20.20.100:FF:000015">
    <property type="entry name" value="Oxidoreductase, aldo/keto reductase family"/>
    <property type="match status" value="1"/>
</dbReference>
<dbReference type="Gene3D" id="3.20.20.100">
    <property type="entry name" value="NADP-dependent oxidoreductase domain"/>
    <property type="match status" value="1"/>
</dbReference>
<dbReference type="InterPro" id="IPR020471">
    <property type="entry name" value="AKR"/>
</dbReference>
<dbReference type="InterPro" id="IPR018170">
    <property type="entry name" value="Aldo/ket_reductase_CS"/>
</dbReference>
<dbReference type="InterPro" id="IPR023210">
    <property type="entry name" value="NADP_OxRdtase_dom"/>
</dbReference>
<dbReference type="InterPro" id="IPR036812">
    <property type="entry name" value="NADP_OxRdtase_dom_sf"/>
</dbReference>
<dbReference type="PANTHER" id="PTHR43827">
    <property type="entry name" value="2,5-DIKETO-D-GLUCONIC ACID REDUCTASE"/>
    <property type="match status" value="1"/>
</dbReference>
<dbReference type="PANTHER" id="PTHR43827:SF3">
    <property type="entry name" value="NADP-DEPENDENT OXIDOREDUCTASE DOMAIN-CONTAINING PROTEIN"/>
    <property type="match status" value="1"/>
</dbReference>
<dbReference type="Pfam" id="PF00248">
    <property type="entry name" value="Aldo_ket_red"/>
    <property type="match status" value="1"/>
</dbReference>
<dbReference type="PIRSF" id="PIRSF000097">
    <property type="entry name" value="AKR"/>
    <property type="match status" value="1"/>
</dbReference>
<dbReference type="PRINTS" id="PR00069">
    <property type="entry name" value="ALDKETRDTASE"/>
</dbReference>
<dbReference type="SUPFAM" id="SSF51430">
    <property type="entry name" value="NAD(P)-linked oxidoreductase"/>
    <property type="match status" value="1"/>
</dbReference>
<dbReference type="PROSITE" id="PS00062">
    <property type="entry name" value="ALDOKETO_REDUCTASE_2"/>
    <property type="match status" value="1"/>
</dbReference>
<protein>
    <recommendedName>
        <fullName evidence="1">Aldo-keto reductase MAP_4149</fullName>
        <ecNumber evidence="1">1.1.1.-</ecNumber>
    </recommendedName>
</protein>
<sequence>MTVIDEIYSSSSAIPTVALNDEAKKPVLGLGVAKLSDEETESSVLAALEAGCRLIDTAASYGNEAAVGRAIAASGIPREELFVTTKLGTSRQGFHSAQESCKESLDRLGLDYLDLYLIHWPAPTLGKYVESFEGMIEARERGHVRSIGVSNFTEDLLATVIEETNEVPAVNQVELHPRLNQAELRQVHAQHDVTTQSYSPLGVGRLIEEPTVTTIAAEYGRTPAQVLVRWNLQLDNVVVSRSSKPERVAENLDVFDFTLEPEHMEAIEGLHDGTRVLHDPMTFMGT</sequence>
<comment type="similarity">
    <text evidence="3">Belongs to the aldo/keto reductase family.</text>
</comment>
<proteinExistence type="inferred from homology"/>
<organism>
    <name type="scientific">Mycolicibacterium paratuberculosis (strain ATCC BAA-968 / K-10)</name>
    <name type="common">Mycobacterium paratuberculosis</name>
    <dbReference type="NCBI Taxonomy" id="262316"/>
    <lineage>
        <taxon>Bacteria</taxon>
        <taxon>Bacillati</taxon>
        <taxon>Actinomycetota</taxon>
        <taxon>Actinomycetes</taxon>
        <taxon>Mycobacteriales</taxon>
        <taxon>Mycobacteriaceae</taxon>
        <taxon>Mycobacterium</taxon>
        <taxon>Mycobacterium avium complex (MAC)</taxon>
    </lineage>
</organism>
<evidence type="ECO:0000250" key="1">
    <source>
        <dbReference type="UniProtKB" id="A0QV09"/>
    </source>
</evidence>
<evidence type="ECO:0000250" key="2">
    <source>
        <dbReference type="UniProtKB" id="P80874"/>
    </source>
</evidence>
<evidence type="ECO:0000305" key="3"/>
<feature type="chain" id="PRO_0000380739" description="Aldo-keto reductase MAP_4149">
    <location>
        <begin position="1"/>
        <end position="286"/>
    </location>
</feature>
<feature type="active site" description="Proton donor" evidence="2">
    <location>
        <position position="61"/>
    </location>
</feature>
<feature type="binding site" evidence="1">
    <location>
        <position position="201"/>
    </location>
    <ligand>
        <name>NADPH</name>
        <dbReference type="ChEBI" id="CHEBI:57783"/>
    </ligand>
</feature>
<feature type="binding site" evidence="1">
    <location>
        <position position="203"/>
    </location>
    <ligand>
        <name>NADPH</name>
        <dbReference type="ChEBI" id="CHEBI:57783"/>
    </ligand>
</feature>
<feature type="binding site" evidence="1">
    <location>
        <position position="239"/>
    </location>
    <ligand>
        <name>NADPH</name>
        <dbReference type="ChEBI" id="CHEBI:57783"/>
    </ligand>
</feature>
<feature type="binding site" evidence="1">
    <location>
        <position position="241"/>
    </location>
    <ligand>
        <name>NADPH</name>
        <dbReference type="ChEBI" id="CHEBI:57783"/>
    </ligand>
</feature>
<feature type="binding site" evidence="1">
    <location>
        <position position="242"/>
    </location>
    <ligand>
        <name>NADPH</name>
        <dbReference type="ChEBI" id="CHEBI:57783"/>
    </ligand>
</feature>
<feature type="binding site" evidence="1">
    <location>
        <position position="247"/>
    </location>
    <ligand>
        <name>NADPH</name>
        <dbReference type="ChEBI" id="CHEBI:57783"/>
    </ligand>
</feature>
<feature type="binding site" evidence="1">
    <location>
        <position position="251"/>
    </location>
    <ligand>
        <name>NADPH</name>
        <dbReference type="ChEBI" id="CHEBI:57783"/>
    </ligand>
</feature>
<reference key="1">
    <citation type="journal article" date="2005" name="Proc. Natl. Acad. Sci. U.S.A.">
        <title>The complete genome sequence of Mycobacterium avium subspecies paratuberculosis.</title>
        <authorList>
            <person name="Li L."/>
            <person name="Bannantine J.P."/>
            <person name="Zhang Q."/>
            <person name="Amonsin A."/>
            <person name="May B.J."/>
            <person name="Alt D."/>
            <person name="Banerji N."/>
            <person name="Kanjilal S."/>
            <person name="Kapur V."/>
        </authorList>
    </citation>
    <scope>NUCLEOTIDE SEQUENCE [LARGE SCALE GENOMIC DNA]</scope>
    <source>
        <strain>ATCC BAA-968 / K-10</strain>
    </source>
</reference>
<accession>Q73SC5</accession>
<keyword id="KW-0521">NADP</keyword>
<keyword id="KW-0560">Oxidoreductase</keyword>
<keyword id="KW-1185">Reference proteome</keyword>